<feature type="chain" id="PRO_0000256905" description="Chaperonin GroEL">
    <location>
        <begin position="1"/>
        <end position="544"/>
    </location>
</feature>
<feature type="binding site" evidence="1">
    <location>
        <begin position="29"/>
        <end position="32"/>
    </location>
    <ligand>
        <name>ATP</name>
        <dbReference type="ChEBI" id="CHEBI:30616"/>
    </ligand>
</feature>
<feature type="binding site" evidence="1">
    <location>
        <begin position="86"/>
        <end position="90"/>
    </location>
    <ligand>
        <name>ATP</name>
        <dbReference type="ChEBI" id="CHEBI:30616"/>
    </ligand>
</feature>
<feature type="binding site" evidence="1">
    <location>
        <position position="413"/>
    </location>
    <ligand>
        <name>ATP</name>
        <dbReference type="ChEBI" id="CHEBI:30616"/>
    </ligand>
</feature>
<feature type="binding site" evidence="1">
    <location>
        <begin position="476"/>
        <end position="478"/>
    </location>
    <ligand>
        <name>ATP</name>
        <dbReference type="ChEBI" id="CHEBI:30616"/>
    </ligand>
</feature>
<feature type="binding site" evidence="1">
    <location>
        <position position="492"/>
    </location>
    <ligand>
        <name>ATP</name>
        <dbReference type="ChEBI" id="CHEBI:30616"/>
    </ligand>
</feature>
<reference key="1">
    <citation type="journal article" date="2006" name="J. Bacteriol.">
        <title>Complete genome sequence of the dehalorespiring bacterium Desulfitobacterium hafniense Y51 and comparison with Dehalococcoides ethenogenes 195.</title>
        <authorList>
            <person name="Nonaka H."/>
            <person name="Keresztes G."/>
            <person name="Shinoda Y."/>
            <person name="Ikenaga Y."/>
            <person name="Abe M."/>
            <person name="Naito K."/>
            <person name="Inatomi K."/>
            <person name="Furukawa K."/>
            <person name="Inui M."/>
            <person name="Yukawa H."/>
        </authorList>
    </citation>
    <scope>NUCLEOTIDE SEQUENCE [LARGE SCALE GENOMIC DNA]</scope>
    <source>
        <strain>Y51</strain>
    </source>
</reference>
<accession>Q24QE3</accession>
<sequence>MAKQIVFNEEARRALERGVNALAESVRVTLGPKGRNVVLDKKFGAPLITNDGVTIAREIELEDPFENMGAQLVKEVATKTNDVAGDGTTTATVLAQAIIREGLKNVAAGANPMGIKRGIEKAVESVVDDIKTNAKPIESKESIAQVASISAGDDNIGVLISDAMEKVGKDGVITVEEAKGMTTELKVVEGMQFDRGYLSAYMITDTDKMEAILNDPYILITDKKIGAIADILPVLEKVVQAGRQLLIIAEDIEGEALATLILNKLRGTFTCVAVKAPGFGDRRKAMLEDIAILTGGTVITEDLGLKLENTTIDMLGRARQIRVTKEETTIVEGSGSQDDIKSRVEAIKKQIDETTSDFDREKLQERLAKLAGGVAVIQVGAATEVEMKEKKLRIEDALAATRAAVEEGIVAGGGCALVDAAKALDSLKLTGDEKTGVAIVYRALEEPLRQIANNAGFEGSIVVEKVRNGGRGVGFNALTEAYEDMIAAGIVDPAKVTRSALQNAASIAAMLLTTECLVSDIPSKDNGAAAMAGMGGMGGMGGMM</sequence>
<name>CH60_DESHY</name>
<organism>
    <name type="scientific">Desulfitobacterium hafniense (strain Y51)</name>
    <dbReference type="NCBI Taxonomy" id="138119"/>
    <lineage>
        <taxon>Bacteria</taxon>
        <taxon>Bacillati</taxon>
        <taxon>Bacillota</taxon>
        <taxon>Clostridia</taxon>
        <taxon>Eubacteriales</taxon>
        <taxon>Desulfitobacteriaceae</taxon>
        <taxon>Desulfitobacterium</taxon>
    </lineage>
</organism>
<gene>
    <name evidence="1" type="primary">groEL</name>
    <name evidence="1" type="synonym">groL</name>
    <name type="ordered locus">DSY3960</name>
</gene>
<protein>
    <recommendedName>
        <fullName evidence="1">Chaperonin GroEL</fullName>
        <ecNumber evidence="1">5.6.1.7</ecNumber>
    </recommendedName>
    <alternativeName>
        <fullName evidence="1">60 kDa chaperonin</fullName>
    </alternativeName>
    <alternativeName>
        <fullName evidence="1">Chaperonin-60</fullName>
        <shortName evidence="1">Cpn60</shortName>
    </alternativeName>
</protein>
<evidence type="ECO:0000255" key="1">
    <source>
        <dbReference type="HAMAP-Rule" id="MF_00600"/>
    </source>
</evidence>
<evidence type="ECO:0000305" key="2"/>
<keyword id="KW-0067">ATP-binding</keyword>
<keyword id="KW-0143">Chaperone</keyword>
<keyword id="KW-0963">Cytoplasm</keyword>
<keyword id="KW-0413">Isomerase</keyword>
<keyword id="KW-0547">Nucleotide-binding</keyword>
<keyword id="KW-1185">Reference proteome</keyword>
<dbReference type="EC" id="5.6.1.7" evidence="1"/>
<dbReference type="EMBL" id="AP008230">
    <property type="protein sequence ID" value="BAE85749.1"/>
    <property type="status" value="ALT_INIT"/>
    <property type="molecule type" value="Genomic_DNA"/>
</dbReference>
<dbReference type="RefSeq" id="WP_005817317.1">
    <property type="nucleotide sequence ID" value="NC_007907.1"/>
</dbReference>
<dbReference type="SMR" id="Q24QE3"/>
<dbReference type="STRING" id="138119.DSY3960"/>
<dbReference type="KEGG" id="dsy:DSY3960"/>
<dbReference type="eggNOG" id="COG0459">
    <property type="taxonomic scope" value="Bacteria"/>
</dbReference>
<dbReference type="HOGENOM" id="CLU_016503_3_0_9"/>
<dbReference type="Proteomes" id="UP000001946">
    <property type="component" value="Chromosome"/>
</dbReference>
<dbReference type="GO" id="GO:0005737">
    <property type="term" value="C:cytoplasm"/>
    <property type="evidence" value="ECO:0007669"/>
    <property type="project" value="UniProtKB-SubCell"/>
</dbReference>
<dbReference type="GO" id="GO:0005524">
    <property type="term" value="F:ATP binding"/>
    <property type="evidence" value="ECO:0007669"/>
    <property type="project" value="UniProtKB-UniRule"/>
</dbReference>
<dbReference type="GO" id="GO:0140662">
    <property type="term" value="F:ATP-dependent protein folding chaperone"/>
    <property type="evidence" value="ECO:0007669"/>
    <property type="project" value="InterPro"/>
</dbReference>
<dbReference type="GO" id="GO:0016853">
    <property type="term" value="F:isomerase activity"/>
    <property type="evidence" value="ECO:0007669"/>
    <property type="project" value="UniProtKB-KW"/>
</dbReference>
<dbReference type="GO" id="GO:0051082">
    <property type="term" value="F:unfolded protein binding"/>
    <property type="evidence" value="ECO:0007669"/>
    <property type="project" value="UniProtKB-UniRule"/>
</dbReference>
<dbReference type="GO" id="GO:0042026">
    <property type="term" value="P:protein refolding"/>
    <property type="evidence" value="ECO:0007669"/>
    <property type="project" value="UniProtKB-UniRule"/>
</dbReference>
<dbReference type="CDD" id="cd03344">
    <property type="entry name" value="GroEL"/>
    <property type="match status" value="1"/>
</dbReference>
<dbReference type="FunFam" id="1.10.560.10:FF:000001">
    <property type="entry name" value="60 kDa chaperonin"/>
    <property type="match status" value="1"/>
</dbReference>
<dbReference type="FunFam" id="3.50.7.10:FF:000001">
    <property type="entry name" value="60 kDa chaperonin"/>
    <property type="match status" value="1"/>
</dbReference>
<dbReference type="Gene3D" id="3.50.7.10">
    <property type="entry name" value="GroEL"/>
    <property type="match status" value="1"/>
</dbReference>
<dbReference type="Gene3D" id="1.10.560.10">
    <property type="entry name" value="GroEL-like equatorial domain"/>
    <property type="match status" value="1"/>
</dbReference>
<dbReference type="Gene3D" id="3.30.260.10">
    <property type="entry name" value="TCP-1-like chaperonin intermediate domain"/>
    <property type="match status" value="1"/>
</dbReference>
<dbReference type="HAMAP" id="MF_00600">
    <property type="entry name" value="CH60"/>
    <property type="match status" value="1"/>
</dbReference>
<dbReference type="InterPro" id="IPR018370">
    <property type="entry name" value="Chaperonin_Cpn60_CS"/>
</dbReference>
<dbReference type="InterPro" id="IPR001844">
    <property type="entry name" value="Cpn60/GroEL"/>
</dbReference>
<dbReference type="InterPro" id="IPR002423">
    <property type="entry name" value="Cpn60/GroEL/TCP-1"/>
</dbReference>
<dbReference type="InterPro" id="IPR027409">
    <property type="entry name" value="GroEL-like_apical_dom_sf"/>
</dbReference>
<dbReference type="InterPro" id="IPR027413">
    <property type="entry name" value="GROEL-like_equatorial_sf"/>
</dbReference>
<dbReference type="InterPro" id="IPR027410">
    <property type="entry name" value="TCP-1-like_intermed_sf"/>
</dbReference>
<dbReference type="NCBIfam" id="TIGR02348">
    <property type="entry name" value="GroEL"/>
    <property type="match status" value="1"/>
</dbReference>
<dbReference type="NCBIfam" id="NF000592">
    <property type="entry name" value="PRK00013.1"/>
    <property type="match status" value="1"/>
</dbReference>
<dbReference type="NCBIfam" id="NF009487">
    <property type="entry name" value="PRK12849.1"/>
    <property type="match status" value="1"/>
</dbReference>
<dbReference type="NCBIfam" id="NF009488">
    <property type="entry name" value="PRK12850.1"/>
    <property type="match status" value="1"/>
</dbReference>
<dbReference type="NCBIfam" id="NF009489">
    <property type="entry name" value="PRK12851.1"/>
    <property type="match status" value="1"/>
</dbReference>
<dbReference type="PANTHER" id="PTHR45633">
    <property type="entry name" value="60 KDA HEAT SHOCK PROTEIN, MITOCHONDRIAL"/>
    <property type="match status" value="1"/>
</dbReference>
<dbReference type="Pfam" id="PF00118">
    <property type="entry name" value="Cpn60_TCP1"/>
    <property type="match status" value="1"/>
</dbReference>
<dbReference type="PRINTS" id="PR00298">
    <property type="entry name" value="CHAPERONIN60"/>
</dbReference>
<dbReference type="SUPFAM" id="SSF52029">
    <property type="entry name" value="GroEL apical domain-like"/>
    <property type="match status" value="1"/>
</dbReference>
<dbReference type="SUPFAM" id="SSF48592">
    <property type="entry name" value="GroEL equatorial domain-like"/>
    <property type="match status" value="1"/>
</dbReference>
<dbReference type="SUPFAM" id="SSF54849">
    <property type="entry name" value="GroEL-intermediate domain like"/>
    <property type="match status" value="1"/>
</dbReference>
<dbReference type="PROSITE" id="PS00296">
    <property type="entry name" value="CHAPERONINS_CPN60"/>
    <property type="match status" value="1"/>
</dbReference>
<proteinExistence type="inferred from homology"/>
<comment type="function">
    <text evidence="1">Together with its co-chaperonin GroES, plays an essential role in assisting protein folding. The GroEL-GroES system forms a nano-cage that allows encapsulation of the non-native substrate proteins and provides a physical environment optimized to promote and accelerate protein folding.</text>
</comment>
<comment type="catalytic activity">
    <reaction evidence="1">
        <text>ATP + H2O + a folded polypeptide = ADP + phosphate + an unfolded polypeptide.</text>
        <dbReference type="EC" id="5.6.1.7"/>
    </reaction>
</comment>
<comment type="subunit">
    <text evidence="1">Forms a cylinder of 14 subunits composed of two heptameric rings stacked back-to-back. Interacts with the co-chaperonin GroES.</text>
</comment>
<comment type="subcellular location">
    <subcellularLocation>
        <location evidence="1">Cytoplasm</location>
    </subcellularLocation>
</comment>
<comment type="similarity">
    <text evidence="1">Belongs to the chaperonin (HSP60) family.</text>
</comment>
<comment type="sequence caution" evidence="2">
    <conflict type="erroneous initiation">
        <sequence resource="EMBL-CDS" id="BAE85749"/>
    </conflict>
</comment>